<keyword id="KW-0131">Cell cycle</keyword>
<keyword id="KW-0132">Cell division</keyword>
<keyword id="KW-0159">Chromosome partition</keyword>
<keyword id="KW-0963">Cytoplasm</keyword>
<name>SCPB_LISMF</name>
<organism>
    <name type="scientific">Listeria monocytogenes serotype 4b (strain F2365)</name>
    <dbReference type="NCBI Taxonomy" id="265669"/>
    <lineage>
        <taxon>Bacteria</taxon>
        <taxon>Bacillati</taxon>
        <taxon>Bacillota</taxon>
        <taxon>Bacilli</taxon>
        <taxon>Bacillales</taxon>
        <taxon>Listeriaceae</taxon>
        <taxon>Listeria</taxon>
    </lineage>
</organism>
<evidence type="ECO:0000255" key="1">
    <source>
        <dbReference type="HAMAP-Rule" id="MF_01804"/>
    </source>
</evidence>
<evidence type="ECO:0000256" key="2">
    <source>
        <dbReference type="SAM" id="MobiDB-lite"/>
    </source>
</evidence>
<protein>
    <recommendedName>
        <fullName evidence="1">Segregation and condensation protein B</fullName>
    </recommendedName>
</protein>
<gene>
    <name evidence="1" type="primary">scpB</name>
    <name type="ordered locus">LMOf2365_1980</name>
</gene>
<accession>Q71Y64</accession>
<comment type="function">
    <text evidence="1">Participates in chromosomal partition during cell division. May act via the formation of a condensin-like complex containing Smc and ScpA that pull DNA away from mid-cell into both cell halves.</text>
</comment>
<comment type="subunit">
    <text evidence="1">Homodimer. Homodimerization may be required to stabilize the binding of ScpA to the Smc head domains. Component of a cohesin-like complex composed of ScpA, ScpB and the Smc homodimer, in which ScpA and ScpB bind to the head domain of Smc. The presence of the three proteins is required for the association of the complex with DNA.</text>
</comment>
<comment type="subcellular location">
    <subcellularLocation>
        <location evidence="1">Cytoplasm</location>
    </subcellularLocation>
    <text evidence="1">Associated with two foci at the outer edges of the nucleoid region in young cells, and at four foci within both cell halves in older cells.</text>
</comment>
<comment type="similarity">
    <text evidence="1">Belongs to the ScpB family.</text>
</comment>
<feature type="chain" id="PRO_0000211136" description="Segregation and condensation protein B">
    <location>
        <begin position="1"/>
        <end position="198"/>
    </location>
</feature>
<feature type="region of interest" description="Disordered" evidence="2">
    <location>
        <begin position="168"/>
        <end position="198"/>
    </location>
</feature>
<dbReference type="EMBL" id="AE017262">
    <property type="protein sequence ID" value="AAT04750.1"/>
    <property type="molecule type" value="Genomic_DNA"/>
</dbReference>
<dbReference type="RefSeq" id="WP_003725939.1">
    <property type="nucleotide sequence ID" value="NC_002973.6"/>
</dbReference>
<dbReference type="SMR" id="Q71Y64"/>
<dbReference type="KEGG" id="lmf:LMOf2365_1980"/>
<dbReference type="HOGENOM" id="CLU_045647_5_3_9"/>
<dbReference type="GO" id="GO:0005737">
    <property type="term" value="C:cytoplasm"/>
    <property type="evidence" value="ECO:0007669"/>
    <property type="project" value="UniProtKB-SubCell"/>
</dbReference>
<dbReference type="GO" id="GO:0051301">
    <property type="term" value="P:cell division"/>
    <property type="evidence" value="ECO:0007669"/>
    <property type="project" value="UniProtKB-KW"/>
</dbReference>
<dbReference type="GO" id="GO:0051304">
    <property type="term" value="P:chromosome separation"/>
    <property type="evidence" value="ECO:0007669"/>
    <property type="project" value="InterPro"/>
</dbReference>
<dbReference type="GO" id="GO:0006260">
    <property type="term" value="P:DNA replication"/>
    <property type="evidence" value="ECO:0007669"/>
    <property type="project" value="UniProtKB-UniRule"/>
</dbReference>
<dbReference type="Gene3D" id="1.10.10.10">
    <property type="entry name" value="Winged helix-like DNA-binding domain superfamily/Winged helix DNA-binding domain"/>
    <property type="match status" value="2"/>
</dbReference>
<dbReference type="HAMAP" id="MF_01804">
    <property type="entry name" value="ScpB"/>
    <property type="match status" value="1"/>
</dbReference>
<dbReference type="InterPro" id="IPR005234">
    <property type="entry name" value="ScpB_csome_segregation"/>
</dbReference>
<dbReference type="InterPro" id="IPR036388">
    <property type="entry name" value="WH-like_DNA-bd_sf"/>
</dbReference>
<dbReference type="InterPro" id="IPR036390">
    <property type="entry name" value="WH_DNA-bd_sf"/>
</dbReference>
<dbReference type="NCBIfam" id="TIGR00281">
    <property type="entry name" value="SMC-Scp complex subunit ScpB"/>
    <property type="match status" value="1"/>
</dbReference>
<dbReference type="PANTHER" id="PTHR34298">
    <property type="entry name" value="SEGREGATION AND CONDENSATION PROTEIN B"/>
    <property type="match status" value="1"/>
</dbReference>
<dbReference type="PANTHER" id="PTHR34298:SF2">
    <property type="entry name" value="SEGREGATION AND CONDENSATION PROTEIN B"/>
    <property type="match status" value="1"/>
</dbReference>
<dbReference type="Pfam" id="PF04079">
    <property type="entry name" value="SMC_ScpB"/>
    <property type="match status" value="1"/>
</dbReference>
<dbReference type="PIRSF" id="PIRSF019345">
    <property type="entry name" value="ScpB"/>
    <property type="match status" value="1"/>
</dbReference>
<dbReference type="SUPFAM" id="SSF46785">
    <property type="entry name" value="Winged helix' DNA-binding domain"/>
    <property type="match status" value="2"/>
</dbReference>
<proteinExistence type="inferred from homology"/>
<reference key="1">
    <citation type="journal article" date="2004" name="Nucleic Acids Res.">
        <title>Whole genome comparisons of serotype 4b and 1/2a strains of the food-borne pathogen Listeria monocytogenes reveal new insights into the core genome components of this species.</title>
        <authorList>
            <person name="Nelson K.E."/>
            <person name="Fouts D.E."/>
            <person name="Mongodin E.F."/>
            <person name="Ravel J."/>
            <person name="DeBoy R.T."/>
            <person name="Kolonay J.F."/>
            <person name="Rasko D.A."/>
            <person name="Angiuoli S.V."/>
            <person name="Gill S.R."/>
            <person name="Paulsen I.T."/>
            <person name="Peterson J.D."/>
            <person name="White O."/>
            <person name="Nelson W.C."/>
            <person name="Nierman W.C."/>
            <person name="Beanan M.J."/>
            <person name="Brinkac L.M."/>
            <person name="Daugherty S.C."/>
            <person name="Dodson R.J."/>
            <person name="Durkin A.S."/>
            <person name="Madupu R."/>
            <person name="Haft D.H."/>
            <person name="Selengut J."/>
            <person name="Van Aken S.E."/>
            <person name="Khouri H.M."/>
            <person name="Fedorova N."/>
            <person name="Forberger H.A."/>
            <person name="Tran B."/>
            <person name="Kathariou S."/>
            <person name="Wonderling L.D."/>
            <person name="Uhlich G.A."/>
            <person name="Bayles D.O."/>
            <person name="Luchansky J.B."/>
            <person name="Fraser C.M."/>
        </authorList>
    </citation>
    <scope>NUCLEOTIDE SEQUENCE [LARGE SCALE GENOMIC DNA]</scope>
    <source>
        <strain>F2365</strain>
    </source>
</reference>
<sequence length="198" mass="21884">MNREEQLGVLESLLFAAGDAGLSTEQLTEVMEITHIEALNLLELLSDRYNGSADRGLILLELAGTFQLATKKAHAEFLRKLVEVPSNTVLSQASLETLAIIAYRQPVTRMEVDEVRGVQTDGPIRTLVAKGLVTDKGRVDGAGRAKLYVTTSEFLDAFGLNSLEDLPKLADPATDEPDQNEMDLFFDRFNQSKEQEEE</sequence>